<evidence type="ECO:0000255" key="1">
    <source>
        <dbReference type="HAMAP-Rule" id="MF_00033"/>
    </source>
</evidence>
<keyword id="KW-0131">Cell cycle</keyword>
<keyword id="KW-0132">Cell division</keyword>
<keyword id="KW-0997">Cell inner membrane</keyword>
<keyword id="KW-1003">Cell membrane</keyword>
<keyword id="KW-0133">Cell shape</keyword>
<keyword id="KW-0961">Cell wall biogenesis/degradation</keyword>
<keyword id="KW-0328">Glycosyltransferase</keyword>
<keyword id="KW-0472">Membrane</keyword>
<keyword id="KW-0573">Peptidoglycan synthesis</keyword>
<keyword id="KW-1185">Reference proteome</keyword>
<keyword id="KW-0808">Transferase</keyword>
<proteinExistence type="inferred from homology"/>
<feature type="chain" id="PRO_0000225056" description="UDP-N-acetylglucosamine--N-acetylmuramyl-(pentapeptide) pyrophosphoryl-undecaprenol N-acetylglucosamine transferase">
    <location>
        <begin position="1"/>
        <end position="364"/>
    </location>
</feature>
<feature type="binding site" evidence="1">
    <location>
        <begin position="10"/>
        <end position="12"/>
    </location>
    <ligand>
        <name>UDP-N-acetyl-alpha-D-glucosamine</name>
        <dbReference type="ChEBI" id="CHEBI:57705"/>
    </ligand>
</feature>
<feature type="binding site" evidence="1">
    <location>
        <position position="124"/>
    </location>
    <ligand>
        <name>UDP-N-acetyl-alpha-D-glucosamine</name>
        <dbReference type="ChEBI" id="CHEBI:57705"/>
    </ligand>
</feature>
<feature type="binding site" evidence="1">
    <location>
        <position position="165"/>
    </location>
    <ligand>
        <name>UDP-N-acetyl-alpha-D-glucosamine</name>
        <dbReference type="ChEBI" id="CHEBI:57705"/>
    </ligand>
</feature>
<feature type="binding site" evidence="1">
    <location>
        <position position="193"/>
    </location>
    <ligand>
        <name>UDP-N-acetyl-alpha-D-glucosamine</name>
        <dbReference type="ChEBI" id="CHEBI:57705"/>
    </ligand>
</feature>
<feature type="binding site" evidence="1">
    <location>
        <position position="248"/>
    </location>
    <ligand>
        <name>UDP-N-acetyl-alpha-D-glucosamine</name>
        <dbReference type="ChEBI" id="CHEBI:57705"/>
    </ligand>
</feature>
<feature type="binding site" evidence="1">
    <location>
        <position position="293"/>
    </location>
    <ligand>
        <name>UDP-N-acetyl-alpha-D-glucosamine</name>
        <dbReference type="ChEBI" id="CHEBI:57705"/>
    </ligand>
</feature>
<gene>
    <name evidence="1" type="primary">murG</name>
    <name type="ordered locus">GSU3069</name>
</gene>
<protein>
    <recommendedName>
        <fullName evidence="1">UDP-N-acetylglucosamine--N-acetylmuramyl-(pentapeptide) pyrophosphoryl-undecaprenol N-acetylglucosamine transferase</fullName>
        <ecNumber evidence="1">2.4.1.227</ecNumber>
    </recommendedName>
    <alternativeName>
        <fullName evidence="1">Undecaprenyl-PP-MurNAc-pentapeptide-UDPGlcNAc GlcNAc transferase</fullName>
    </alternativeName>
</protein>
<reference key="1">
    <citation type="journal article" date="2003" name="Science">
        <title>Genome of Geobacter sulfurreducens: metal reduction in subsurface environments.</title>
        <authorList>
            <person name="Methe B.A."/>
            <person name="Nelson K.E."/>
            <person name="Eisen J.A."/>
            <person name="Paulsen I.T."/>
            <person name="Nelson W.C."/>
            <person name="Heidelberg J.F."/>
            <person name="Wu D."/>
            <person name="Wu M."/>
            <person name="Ward N.L."/>
            <person name="Beanan M.J."/>
            <person name="Dodson R.J."/>
            <person name="Madupu R."/>
            <person name="Brinkac L.M."/>
            <person name="Daugherty S.C."/>
            <person name="DeBoy R.T."/>
            <person name="Durkin A.S."/>
            <person name="Gwinn M.L."/>
            <person name="Kolonay J.F."/>
            <person name="Sullivan S.A."/>
            <person name="Haft D.H."/>
            <person name="Selengut J."/>
            <person name="Davidsen T.M."/>
            <person name="Zafar N."/>
            <person name="White O."/>
            <person name="Tran B."/>
            <person name="Romero C."/>
            <person name="Forberger H.A."/>
            <person name="Weidman J.F."/>
            <person name="Khouri H.M."/>
            <person name="Feldblyum T.V."/>
            <person name="Utterback T.R."/>
            <person name="Van Aken S.E."/>
            <person name="Lovley D.R."/>
            <person name="Fraser C.M."/>
        </authorList>
    </citation>
    <scope>NUCLEOTIDE SEQUENCE [LARGE SCALE GENOMIC DNA]</scope>
    <source>
        <strain>ATCC 51573 / DSM 12127 / PCA</strain>
    </source>
</reference>
<sequence>MKLLIAGGGTGGHLFPGIAVAEEFLARDKQNEVLFVGTWKGIEARVLPKTGYRLECITAAGIRGKGSLARAKGLAKFLYGYAQSRKILKEFRPDLVLGVGGYASAPTLMAARGMQIPRFIHEQNAIPGFTNRMLAKVADKIFISLEESRTYFPEDKTLLTGNPLRRQILEQVALAESRERGDDAFHLLVFGGSAGAHRINLTMGEALPSLKEAKGRLRITHQTGENDLEDVTAAYEEQGFTADVVAFIDSMADAYRWADLIVCRAGATTLAEVTACGKPCIFIPYPHAVDDHQRRNAESLLKRGAGFVIIEQELSGEVLAQAIRDLMDDPARLKAVGEAAQELARLDAAQAIVDEMVASTRKEE</sequence>
<dbReference type="EC" id="2.4.1.227" evidence="1"/>
<dbReference type="EMBL" id="AE017180">
    <property type="protein sequence ID" value="AAR36461.1"/>
    <property type="molecule type" value="Genomic_DNA"/>
</dbReference>
<dbReference type="RefSeq" id="NP_954111.1">
    <property type="nucleotide sequence ID" value="NC_002939.5"/>
</dbReference>
<dbReference type="RefSeq" id="WP_010943694.1">
    <property type="nucleotide sequence ID" value="NC_002939.5"/>
</dbReference>
<dbReference type="SMR" id="Q748D6"/>
<dbReference type="FunCoup" id="Q748D6">
    <property type="interactions" value="326"/>
</dbReference>
<dbReference type="STRING" id="243231.GSU3069"/>
<dbReference type="CAZy" id="GT28">
    <property type="family name" value="Glycosyltransferase Family 28"/>
</dbReference>
<dbReference type="EnsemblBacteria" id="AAR36461">
    <property type="protein sequence ID" value="AAR36461"/>
    <property type="gene ID" value="GSU3069"/>
</dbReference>
<dbReference type="KEGG" id="gsu:GSU3069"/>
<dbReference type="PATRIC" id="fig|243231.5.peg.3092"/>
<dbReference type="eggNOG" id="COG0707">
    <property type="taxonomic scope" value="Bacteria"/>
</dbReference>
<dbReference type="HOGENOM" id="CLU_037404_2_0_7"/>
<dbReference type="InParanoid" id="Q748D6"/>
<dbReference type="OrthoDB" id="9808936at2"/>
<dbReference type="UniPathway" id="UPA00219"/>
<dbReference type="Proteomes" id="UP000000577">
    <property type="component" value="Chromosome"/>
</dbReference>
<dbReference type="GO" id="GO:0005886">
    <property type="term" value="C:plasma membrane"/>
    <property type="evidence" value="ECO:0007669"/>
    <property type="project" value="UniProtKB-SubCell"/>
</dbReference>
<dbReference type="GO" id="GO:0051991">
    <property type="term" value="F:UDP-N-acetyl-D-glucosamine:N-acetylmuramoyl-L-alanyl-D-glutamyl-meso-2,6-diaminopimelyl-D-alanyl-D-alanine-diphosphoundecaprenol 4-beta-N-acetylglucosaminlytransferase activity"/>
    <property type="evidence" value="ECO:0007669"/>
    <property type="project" value="RHEA"/>
</dbReference>
<dbReference type="GO" id="GO:0050511">
    <property type="term" value="F:undecaprenyldiphospho-muramoylpentapeptide beta-N-acetylglucosaminyltransferase activity"/>
    <property type="evidence" value="ECO:0000318"/>
    <property type="project" value="GO_Central"/>
</dbReference>
<dbReference type="GO" id="GO:0005975">
    <property type="term" value="P:carbohydrate metabolic process"/>
    <property type="evidence" value="ECO:0007669"/>
    <property type="project" value="InterPro"/>
</dbReference>
<dbReference type="GO" id="GO:0051301">
    <property type="term" value="P:cell division"/>
    <property type="evidence" value="ECO:0007669"/>
    <property type="project" value="UniProtKB-KW"/>
</dbReference>
<dbReference type="GO" id="GO:0071555">
    <property type="term" value="P:cell wall organization"/>
    <property type="evidence" value="ECO:0007669"/>
    <property type="project" value="UniProtKB-KW"/>
</dbReference>
<dbReference type="GO" id="GO:0030259">
    <property type="term" value="P:lipid glycosylation"/>
    <property type="evidence" value="ECO:0007669"/>
    <property type="project" value="UniProtKB-UniRule"/>
</dbReference>
<dbReference type="GO" id="GO:0009252">
    <property type="term" value="P:peptidoglycan biosynthetic process"/>
    <property type="evidence" value="ECO:0007669"/>
    <property type="project" value="UniProtKB-UniRule"/>
</dbReference>
<dbReference type="GO" id="GO:0008360">
    <property type="term" value="P:regulation of cell shape"/>
    <property type="evidence" value="ECO:0007669"/>
    <property type="project" value="UniProtKB-KW"/>
</dbReference>
<dbReference type="CDD" id="cd03785">
    <property type="entry name" value="GT28_MurG"/>
    <property type="match status" value="1"/>
</dbReference>
<dbReference type="Gene3D" id="3.40.50.2000">
    <property type="entry name" value="Glycogen Phosphorylase B"/>
    <property type="match status" value="2"/>
</dbReference>
<dbReference type="HAMAP" id="MF_00033">
    <property type="entry name" value="MurG"/>
    <property type="match status" value="1"/>
</dbReference>
<dbReference type="InterPro" id="IPR006009">
    <property type="entry name" value="GlcNAc_MurG"/>
</dbReference>
<dbReference type="InterPro" id="IPR007235">
    <property type="entry name" value="Glyco_trans_28_C"/>
</dbReference>
<dbReference type="InterPro" id="IPR004276">
    <property type="entry name" value="GlycoTrans_28_N"/>
</dbReference>
<dbReference type="NCBIfam" id="TIGR01133">
    <property type="entry name" value="murG"/>
    <property type="match status" value="1"/>
</dbReference>
<dbReference type="PANTHER" id="PTHR21015:SF22">
    <property type="entry name" value="GLYCOSYLTRANSFERASE"/>
    <property type="match status" value="1"/>
</dbReference>
<dbReference type="PANTHER" id="PTHR21015">
    <property type="entry name" value="UDP-N-ACETYLGLUCOSAMINE--N-ACETYLMURAMYL-(PENTAPEPTIDE) PYROPHOSPHORYL-UNDECAPRENOL N-ACETYLGLUCOSAMINE TRANSFERASE 1"/>
    <property type="match status" value="1"/>
</dbReference>
<dbReference type="Pfam" id="PF04101">
    <property type="entry name" value="Glyco_tran_28_C"/>
    <property type="match status" value="1"/>
</dbReference>
<dbReference type="Pfam" id="PF03033">
    <property type="entry name" value="Glyco_transf_28"/>
    <property type="match status" value="1"/>
</dbReference>
<dbReference type="SUPFAM" id="SSF53756">
    <property type="entry name" value="UDP-Glycosyltransferase/glycogen phosphorylase"/>
    <property type="match status" value="1"/>
</dbReference>
<accession>Q748D6</accession>
<organism>
    <name type="scientific">Geobacter sulfurreducens (strain ATCC 51573 / DSM 12127 / PCA)</name>
    <dbReference type="NCBI Taxonomy" id="243231"/>
    <lineage>
        <taxon>Bacteria</taxon>
        <taxon>Pseudomonadati</taxon>
        <taxon>Thermodesulfobacteriota</taxon>
        <taxon>Desulfuromonadia</taxon>
        <taxon>Geobacterales</taxon>
        <taxon>Geobacteraceae</taxon>
        <taxon>Geobacter</taxon>
    </lineage>
</organism>
<comment type="function">
    <text evidence="1">Cell wall formation. Catalyzes the transfer of a GlcNAc subunit on undecaprenyl-pyrophosphoryl-MurNAc-pentapeptide (lipid intermediate I) to form undecaprenyl-pyrophosphoryl-MurNAc-(pentapeptide)GlcNAc (lipid intermediate II).</text>
</comment>
<comment type="catalytic activity">
    <reaction evidence="1">
        <text>di-trans,octa-cis-undecaprenyl diphospho-N-acetyl-alpha-D-muramoyl-L-alanyl-D-glutamyl-meso-2,6-diaminopimeloyl-D-alanyl-D-alanine + UDP-N-acetyl-alpha-D-glucosamine = di-trans,octa-cis-undecaprenyl diphospho-[N-acetyl-alpha-D-glucosaminyl-(1-&gt;4)]-N-acetyl-alpha-D-muramoyl-L-alanyl-D-glutamyl-meso-2,6-diaminopimeloyl-D-alanyl-D-alanine + UDP + H(+)</text>
        <dbReference type="Rhea" id="RHEA:31227"/>
        <dbReference type="ChEBI" id="CHEBI:15378"/>
        <dbReference type="ChEBI" id="CHEBI:57705"/>
        <dbReference type="ChEBI" id="CHEBI:58223"/>
        <dbReference type="ChEBI" id="CHEBI:61387"/>
        <dbReference type="ChEBI" id="CHEBI:61388"/>
        <dbReference type="EC" id="2.4.1.227"/>
    </reaction>
</comment>
<comment type="pathway">
    <text evidence="1">Cell wall biogenesis; peptidoglycan biosynthesis.</text>
</comment>
<comment type="subcellular location">
    <subcellularLocation>
        <location evidence="1">Cell inner membrane</location>
        <topology evidence="1">Peripheral membrane protein</topology>
        <orientation evidence="1">Cytoplasmic side</orientation>
    </subcellularLocation>
</comment>
<comment type="similarity">
    <text evidence="1">Belongs to the glycosyltransferase 28 family. MurG subfamily.</text>
</comment>
<name>MURG_GEOSL</name>